<name>PSD_NEIGO</name>
<gene>
    <name evidence="1" type="primary">psd</name>
</gene>
<proteinExistence type="inferred from homology"/>
<organism>
    <name type="scientific">Neisseria gonorrhoeae</name>
    <dbReference type="NCBI Taxonomy" id="485"/>
    <lineage>
        <taxon>Bacteria</taxon>
        <taxon>Pseudomonadati</taxon>
        <taxon>Pseudomonadota</taxon>
        <taxon>Betaproteobacteria</taxon>
        <taxon>Neisseriales</taxon>
        <taxon>Neisseriaceae</taxon>
        <taxon>Neisseria</taxon>
    </lineage>
</organism>
<reference key="1">
    <citation type="journal article" date="1997" name="Mol. Gen. Genet.">
        <title>Cloning, nucleotide sequence and transcriptional analysis of the uvrA gene from Neisseria gonorrhoeae.</title>
        <authorList>
            <person name="Black C.G."/>
            <person name="Fyfe J.A.M."/>
            <person name="Davies J.K."/>
        </authorList>
    </citation>
    <scope>NUCLEOTIDE SEQUENCE [GENOMIC DNA]</scope>
</reference>
<keyword id="KW-1003">Cell membrane</keyword>
<keyword id="KW-0210">Decarboxylase</keyword>
<keyword id="KW-0444">Lipid biosynthesis</keyword>
<keyword id="KW-0443">Lipid metabolism</keyword>
<keyword id="KW-0456">Lyase</keyword>
<keyword id="KW-0472">Membrane</keyword>
<keyword id="KW-0594">Phospholipid biosynthesis</keyword>
<keyword id="KW-1208">Phospholipid metabolism</keyword>
<keyword id="KW-0670">Pyruvate</keyword>
<keyword id="KW-0865">Zymogen</keyword>
<feature type="chain" id="PRO_0000029783" description="Phosphatidylserine decarboxylase beta chain" evidence="1">
    <location>
        <begin position="1"/>
        <end position="182"/>
    </location>
</feature>
<feature type="chain" id="PRO_0000029784" description="Phosphatidylserine decarboxylase alpha chain" evidence="1">
    <location>
        <begin position="183"/>
        <end position="259"/>
    </location>
</feature>
<feature type="active site" description="Schiff-base intermediate with substrate; via pyruvic acid" evidence="1">
    <location>
        <position position="183"/>
    </location>
</feature>
<feature type="site" description="Cleavage (non-hydrolytic); by autocatalysis" evidence="1">
    <location>
        <begin position="182"/>
        <end position="183"/>
    </location>
</feature>
<feature type="modified residue" description="Pyruvic acid (Ser); by autocatalysis" evidence="1">
    <location>
        <position position="183"/>
    </location>
</feature>
<accession>Q50967</accession>
<sequence length="259" mass="28294">MNRLYPHPIIAREGWPIIGGGLALSLLVSMCCGWWSLPFWVFTVFALQFFRDPAREIPQNPEAVLSPVDGRIVVVERARDPYRDVDALKISIFMNVFNVHSQKSPADCTVTKVVYNKGKFVNADLDKASTENERNAVLATTASGREITFVQVAGLVARRILCYTQAGAKLSRGERYGFIRFGSRVDMYLPVDAQAQVAIGDKVTGVKTVLARLPLTDSQADPVSQAASVETAANPSAEQQQIEAAAAKIQAAVQDVLKD</sequence>
<dbReference type="EC" id="4.1.1.65" evidence="1"/>
<dbReference type="EMBL" id="U34760">
    <property type="protein sequence ID" value="AAA84884.1"/>
    <property type="molecule type" value="Genomic_DNA"/>
</dbReference>
<dbReference type="RefSeq" id="WP_003689647.1">
    <property type="nucleotide sequence ID" value="NZ_WHPL01000001.1"/>
</dbReference>
<dbReference type="UniPathway" id="UPA00558">
    <property type="reaction ID" value="UER00616"/>
</dbReference>
<dbReference type="GO" id="GO:0005886">
    <property type="term" value="C:plasma membrane"/>
    <property type="evidence" value="ECO:0007669"/>
    <property type="project" value="UniProtKB-SubCell"/>
</dbReference>
<dbReference type="GO" id="GO:0004609">
    <property type="term" value="F:phosphatidylserine decarboxylase activity"/>
    <property type="evidence" value="ECO:0007669"/>
    <property type="project" value="UniProtKB-UniRule"/>
</dbReference>
<dbReference type="GO" id="GO:0006646">
    <property type="term" value="P:phosphatidylethanolamine biosynthetic process"/>
    <property type="evidence" value="ECO:0007669"/>
    <property type="project" value="UniProtKB-UniRule"/>
</dbReference>
<dbReference type="HAMAP" id="MF_00664">
    <property type="entry name" value="PS_decarb_PSD_A"/>
    <property type="match status" value="1"/>
</dbReference>
<dbReference type="InterPro" id="IPR003817">
    <property type="entry name" value="PS_Dcarbxylase"/>
</dbReference>
<dbReference type="InterPro" id="IPR033175">
    <property type="entry name" value="PSD-A"/>
</dbReference>
<dbReference type="NCBIfam" id="TIGR00164">
    <property type="entry name" value="AS_decarb"/>
    <property type="match status" value="1"/>
</dbReference>
<dbReference type="NCBIfam" id="NF003678">
    <property type="entry name" value="PRK05305.1-2"/>
    <property type="match status" value="1"/>
</dbReference>
<dbReference type="NCBIfam" id="NF003680">
    <property type="entry name" value="PRK05305.1-5"/>
    <property type="match status" value="1"/>
</dbReference>
<dbReference type="PANTHER" id="PTHR35809">
    <property type="entry name" value="ARCHAETIDYLSERINE DECARBOXYLASE PROENZYME-RELATED"/>
    <property type="match status" value="1"/>
</dbReference>
<dbReference type="PANTHER" id="PTHR35809:SF1">
    <property type="entry name" value="ARCHAETIDYLSERINE DECARBOXYLASE PROENZYME-RELATED"/>
    <property type="match status" value="1"/>
</dbReference>
<dbReference type="Pfam" id="PF02666">
    <property type="entry name" value="PS_Dcarbxylase"/>
    <property type="match status" value="1"/>
</dbReference>
<comment type="function">
    <text evidence="1">Catalyzes the formation of phosphatidylethanolamine (PtdEtn) from phosphatidylserine (PtdSer).</text>
</comment>
<comment type="catalytic activity">
    <reaction evidence="1">
        <text>a 1,2-diacyl-sn-glycero-3-phospho-L-serine + H(+) = a 1,2-diacyl-sn-glycero-3-phosphoethanolamine + CO2</text>
        <dbReference type="Rhea" id="RHEA:20828"/>
        <dbReference type="ChEBI" id="CHEBI:15378"/>
        <dbReference type="ChEBI" id="CHEBI:16526"/>
        <dbReference type="ChEBI" id="CHEBI:57262"/>
        <dbReference type="ChEBI" id="CHEBI:64612"/>
        <dbReference type="EC" id="4.1.1.65"/>
    </reaction>
</comment>
<comment type="cofactor">
    <cofactor evidence="1">
        <name>pyruvate</name>
        <dbReference type="ChEBI" id="CHEBI:15361"/>
    </cofactor>
    <text evidence="1">Binds 1 pyruvoyl group covalently per subunit.</text>
</comment>
<comment type="pathway">
    <text evidence="1">Phospholipid metabolism; phosphatidylethanolamine biosynthesis; phosphatidylethanolamine from CDP-diacylglycerol: step 2/2.</text>
</comment>
<comment type="subunit">
    <text evidence="1">Heterodimer of a large membrane-associated beta subunit and a small pyruvoyl-containing alpha subunit.</text>
</comment>
<comment type="subcellular location">
    <subcellularLocation>
        <location evidence="1">Cell membrane</location>
        <topology evidence="1">Peripheral membrane protein</topology>
    </subcellularLocation>
</comment>
<comment type="PTM">
    <text evidence="1">Is synthesized initially as an inactive proenzyme. Formation of the active enzyme involves a self-maturation process in which the active site pyruvoyl group is generated from an internal serine residue via an autocatalytic post-translational modification. Two non-identical subunits are generated from the proenzyme in this reaction, and the pyruvate is formed at the N-terminus of the alpha chain, which is derived from the carboxyl end of the proenzyme. The post-translation cleavage follows an unusual pathway, termed non-hydrolytic serinolysis, in which the side chain hydroxyl group of the serine supplies its oxygen atom to form the C-terminus of the beta chain, while the remainder of the serine residue undergoes an oxidative deamination to produce ammonia and the pyruvoyl prosthetic group on the alpha chain.</text>
</comment>
<comment type="similarity">
    <text evidence="1">Belongs to the phosphatidylserine decarboxylase family. PSD-A subfamily.</text>
</comment>
<evidence type="ECO:0000255" key="1">
    <source>
        <dbReference type="HAMAP-Rule" id="MF_00664"/>
    </source>
</evidence>
<protein>
    <recommendedName>
        <fullName evidence="1">Phosphatidylserine decarboxylase proenzyme</fullName>
        <ecNumber evidence="1">4.1.1.65</ecNumber>
    </recommendedName>
    <component>
        <recommendedName>
            <fullName evidence="1">Phosphatidylserine decarboxylase alpha chain</fullName>
        </recommendedName>
    </component>
    <component>
        <recommendedName>
            <fullName evidence="1">Phosphatidylserine decarboxylase beta chain</fullName>
        </recommendedName>
    </component>
</protein>